<keyword id="KW-0961">Cell wall biogenesis/degradation</keyword>
<keyword id="KW-0256">Endoplasmic reticulum</keyword>
<keyword id="KW-0325">Glycoprotein</keyword>
<keyword id="KW-0337">GPI-anchor biosynthesis</keyword>
<keyword id="KW-0472">Membrane</keyword>
<keyword id="KW-1185">Reference proteome</keyword>
<keyword id="KW-0808">Transferase</keyword>
<keyword id="KW-0812">Transmembrane</keyword>
<keyword id="KW-1133">Transmembrane helix</keyword>
<feature type="chain" id="PRO_0000246202" description="GPI ethanolamine phosphate transferase 1">
    <location>
        <begin position="1"/>
        <end position="1022"/>
    </location>
</feature>
<feature type="topological domain" description="Cytoplasmic" evidence="2">
    <location>
        <begin position="1"/>
        <end position="6"/>
    </location>
</feature>
<feature type="transmembrane region" description="Helical" evidence="2">
    <location>
        <begin position="7"/>
        <end position="27"/>
    </location>
</feature>
<feature type="topological domain" description="Lumenal" evidence="2">
    <location>
        <begin position="28"/>
        <end position="466"/>
    </location>
</feature>
<feature type="transmembrane region" description="Helical" evidence="2">
    <location>
        <begin position="467"/>
        <end position="487"/>
    </location>
</feature>
<feature type="topological domain" description="Cytoplasmic" evidence="2">
    <location>
        <begin position="488"/>
        <end position="498"/>
    </location>
</feature>
<feature type="transmembrane region" description="Helical" evidence="2">
    <location>
        <begin position="499"/>
        <end position="519"/>
    </location>
</feature>
<feature type="topological domain" description="Lumenal" evidence="2">
    <location>
        <begin position="520"/>
        <end position="560"/>
    </location>
</feature>
<feature type="transmembrane region" description="Helical" evidence="2">
    <location>
        <begin position="561"/>
        <end position="581"/>
    </location>
</feature>
<feature type="topological domain" description="Cytoplasmic" evidence="2">
    <location>
        <begin position="582"/>
        <end position="589"/>
    </location>
</feature>
<feature type="transmembrane region" description="Helical" evidence="2">
    <location>
        <begin position="590"/>
        <end position="610"/>
    </location>
</feature>
<feature type="topological domain" description="Lumenal" evidence="2">
    <location>
        <begin position="611"/>
        <end position="614"/>
    </location>
</feature>
<feature type="transmembrane region" description="Helical" evidence="2">
    <location>
        <begin position="615"/>
        <end position="635"/>
    </location>
</feature>
<feature type="topological domain" description="Cytoplasmic" evidence="2">
    <location>
        <begin position="636"/>
        <end position="640"/>
    </location>
</feature>
<feature type="transmembrane region" description="Helical" evidence="2">
    <location>
        <begin position="641"/>
        <end position="661"/>
    </location>
</feature>
<feature type="topological domain" description="Lumenal" evidence="2">
    <location>
        <begin position="662"/>
        <end position="685"/>
    </location>
</feature>
<feature type="transmembrane region" description="Helical" evidence="2">
    <location>
        <begin position="686"/>
        <end position="706"/>
    </location>
</feature>
<feature type="topological domain" description="Cytoplasmic" evidence="2">
    <location>
        <begin position="707"/>
        <end position="713"/>
    </location>
</feature>
<feature type="transmembrane region" description="Helical" evidence="2">
    <location>
        <begin position="714"/>
        <end position="734"/>
    </location>
</feature>
<feature type="topological domain" description="Lumenal" evidence="2">
    <location>
        <begin position="735"/>
        <end position="749"/>
    </location>
</feature>
<feature type="transmembrane region" description="Helical" evidence="2">
    <location>
        <begin position="750"/>
        <end position="770"/>
    </location>
</feature>
<feature type="transmembrane region" description="Helical" evidence="2">
    <location>
        <begin position="771"/>
        <end position="791"/>
    </location>
</feature>
<feature type="topological domain" description="Lumenal" evidence="2">
    <location>
        <begin position="792"/>
        <end position="837"/>
    </location>
</feature>
<feature type="transmembrane region" description="Helical" evidence="2">
    <location>
        <begin position="838"/>
        <end position="858"/>
    </location>
</feature>
<feature type="topological domain" description="Cytoplasmic" evidence="2">
    <location>
        <begin position="859"/>
        <end position="880"/>
    </location>
</feature>
<feature type="transmembrane region" description="Helical" evidence="2">
    <location>
        <begin position="881"/>
        <end position="901"/>
    </location>
</feature>
<feature type="topological domain" description="Lumenal" evidence="2">
    <location>
        <begin position="902"/>
        <end position="910"/>
    </location>
</feature>
<feature type="transmembrane region" description="Helical" evidence="2">
    <location>
        <begin position="911"/>
        <end position="931"/>
    </location>
</feature>
<feature type="topological domain" description="Cytoplasmic" evidence="2">
    <location>
        <begin position="932"/>
        <end position="947"/>
    </location>
</feature>
<feature type="transmembrane region" description="Helical" evidence="2">
    <location>
        <begin position="948"/>
        <end position="968"/>
    </location>
</feature>
<feature type="topological domain" description="Lumenal" evidence="2">
    <location>
        <begin position="969"/>
        <end position="1022"/>
    </location>
</feature>
<feature type="region of interest" description="Disordered" evidence="3">
    <location>
        <begin position="998"/>
        <end position="1022"/>
    </location>
</feature>
<feature type="glycosylation site" description="N-linked (GlcNAc...) asparagine" evidence="2">
    <location>
        <position position="148"/>
    </location>
</feature>
<feature type="glycosylation site" description="N-linked (GlcNAc...) asparagine" evidence="2">
    <location>
        <position position="433"/>
    </location>
</feature>
<feature type="glycosylation site" description="N-linked (GlcNAc...) asparagine" evidence="2">
    <location>
        <position position="805"/>
    </location>
</feature>
<feature type="glycosylation site" description="N-linked (GlcNAc...) asparagine" evidence="2">
    <location>
        <position position="989"/>
    </location>
</feature>
<evidence type="ECO:0000250" key="1"/>
<evidence type="ECO:0000255" key="2"/>
<evidence type="ECO:0000256" key="3">
    <source>
        <dbReference type="SAM" id="MobiDB-lite"/>
    </source>
</evidence>
<evidence type="ECO:0000305" key="4"/>
<gene>
    <name type="primary">mcd4</name>
    <name type="ORF">AO090011000320</name>
</gene>
<dbReference type="EC" id="2.-.-.-"/>
<dbReference type="EMBL" id="BA000055">
    <property type="protein sequence ID" value="BAE64836.1"/>
    <property type="molecule type" value="Genomic_DNA"/>
</dbReference>
<dbReference type="RefSeq" id="XP_001825969.1">
    <property type="nucleotide sequence ID" value="XM_001825917.1"/>
</dbReference>
<dbReference type="SMR" id="Q2U0S9"/>
<dbReference type="STRING" id="510516.Q2U0S9"/>
<dbReference type="GlyCosmos" id="Q2U0S9">
    <property type="glycosylation" value="4 sites, No reported glycans"/>
</dbReference>
<dbReference type="EnsemblFungi" id="BAE64836">
    <property type="protein sequence ID" value="BAE64836"/>
    <property type="gene ID" value="AO090011000320"/>
</dbReference>
<dbReference type="GeneID" id="5998072"/>
<dbReference type="KEGG" id="aor:AO090011000320"/>
<dbReference type="VEuPathDB" id="FungiDB:AO090011000320"/>
<dbReference type="HOGENOM" id="CLU_007676_0_0_1"/>
<dbReference type="OMA" id="QSYFHRE"/>
<dbReference type="OrthoDB" id="107088at5052"/>
<dbReference type="UniPathway" id="UPA00196"/>
<dbReference type="Proteomes" id="UP000006564">
    <property type="component" value="Chromosome 7"/>
</dbReference>
<dbReference type="GO" id="GO:0005789">
    <property type="term" value="C:endoplasmic reticulum membrane"/>
    <property type="evidence" value="ECO:0007669"/>
    <property type="project" value="UniProtKB-SubCell"/>
</dbReference>
<dbReference type="GO" id="GO:0051377">
    <property type="term" value="F:mannose-ethanolamine phosphotransferase activity"/>
    <property type="evidence" value="ECO:0007669"/>
    <property type="project" value="InterPro"/>
</dbReference>
<dbReference type="GO" id="GO:0071555">
    <property type="term" value="P:cell wall organization"/>
    <property type="evidence" value="ECO:0007669"/>
    <property type="project" value="UniProtKB-KW"/>
</dbReference>
<dbReference type="GO" id="GO:0006506">
    <property type="term" value="P:GPI anchor biosynthetic process"/>
    <property type="evidence" value="ECO:0007669"/>
    <property type="project" value="UniProtKB-UniPathway"/>
</dbReference>
<dbReference type="CDD" id="cd16020">
    <property type="entry name" value="GPI_EPT_1"/>
    <property type="match status" value="1"/>
</dbReference>
<dbReference type="FunFam" id="3.40.720.10:FF:000015">
    <property type="entry name" value="GPI ethanolamine phosphate transferase 1"/>
    <property type="match status" value="1"/>
</dbReference>
<dbReference type="Gene3D" id="3.40.720.10">
    <property type="entry name" value="Alkaline Phosphatase, subunit A"/>
    <property type="match status" value="1"/>
</dbReference>
<dbReference type="InterPro" id="IPR017850">
    <property type="entry name" value="Alkaline_phosphatase_core_sf"/>
</dbReference>
<dbReference type="InterPro" id="IPR007070">
    <property type="entry name" value="GPI_EtnP_transferase_1"/>
</dbReference>
<dbReference type="InterPro" id="IPR017852">
    <property type="entry name" value="GPI_EtnP_transferase_1_C"/>
</dbReference>
<dbReference type="InterPro" id="IPR002591">
    <property type="entry name" value="Phosphodiest/P_Trfase"/>
</dbReference>
<dbReference type="InterPro" id="IPR037671">
    <property type="entry name" value="PIGN_N"/>
</dbReference>
<dbReference type="PANTHER" id="PTHR12250:SF0">
    <property type="entry name" value="GPI ETHANOLAMINE PHOSPHATE TRANSFERASE 1"/>
    <property type="match status" value="1"/>
</dbReference>
<dbReference type="PANTHER" id="PTHR12250">
    <property type="entry name" value="PHOSPHATIDYLINOSITOL GLYCAN, CLASS N"/>
    <property type="match status" value="1"/>
</dbReference>
<dbReference type="Pfam" id="PF01663">
    <property type="entry name" value="Phosphodiest"/>
    <property type="match status" value="1"/>
</dbReference>
<dbReference type="Pfam" id="PF04987">
    <property type="entry name" value="PigN"/>
    <property type="match status" value="1"/>
</dbReference>
<dbReference type="SUPFAM" id="SSF53649">
    <property type="entry name" value="Alkaline phosphatase-like"/>
    <property type="match status" value="1"/>
</dbReference>
<accession>Q2U0S9</accession>
<proteinExistence type="inferred from homology"/>
<sequence length="1022" mass="113035">MARVGRVGFLTLAVVFHLMYAYSIFDIYFVSPIVSGMRSFGVEREASAEAPAKRLVLFVADGLRADKAFQALPDPDAPSDLENDEPIYLAPFIRSRALSHGTFGISHTRVPTESRPGHVALIAGLYEDVSAVTTGWKLNPVDFDSVFNRSRHTWSWGSPDILPMFKEGAVPGRIDADTYGEEAEDFSADATKLDIWVFDKVKELFASAKKDPELDAKLREDKLVFFLHLLGLDTTGHAYRPYSKEYLRNIKLVDKGVQEITQLVEDFYGDGKTSFVFTADHGMSDWGSHGDGHPDNTRTPLVVWGSGVASPRYTHEGTITGHEDGVSADWGLDSVQRNDVAQADVAALMAYLVGLDFPTNSVGQLPLGYLDTSPKDKALAALANAQGVLEMYRVKEEQKRDALLRYTPFEPLADNGETSVEARLERIKTLISNKSYDASIQLSSELLLTALEGLRYLQTYDWLFLRTIVSLGYLGWIAYALTTVIDLHVLHGKSESNRTTFSIMFFSSILVALFSVLLYQGSSWRYYLYALFPIFFWEEVFARRKALLAGREILLGHVHSVSGYFAFAIQLLLYVGVLEALVQSYFHRDIFTVCFILGGFWPITYGTKFLGQHKLLSASWALGCFLMSIFTLLPANKVEDMMMISCGSLLMFLTGLLYLIFERSILGQKRSSDPNSVVSSCGSRTIMGAQVGMILLALIVTRSSVASLQAKQGLPLGNQVLGWAILVSSLLLPFLHRLYPNSHYLHRLMVIFLTFSPIFIILTISYEGLFYFVFCMTLLAWVRLEQAIYIHTTAPTREQDHSVANGSLPAKKPSPGNTVVVEGQPYRYRTLSVSDARVALFFFFLLQSGFFSTGNIASVSSFSLDSVYRLIPIFNPFAQGALLILKLLIPFAIISANLGILNHRLEVAPSALFMVVMSISDVMTLNFFYMVRDEGSWLEIGTTISHFCIASFLCTFVAVLEFLSELFISGVDFGHPATTVGSAVAKAVNGSVACGHSPDSDISGEDSTSVGITAKADPDARS</sequence>
<name>MCD4_ASPOR</name>
<protein>
    <recommendedName>
        <fullName>GPI ethanolamine phosphate transferase 1</fullName>
        <ecNumber>2.-.-.-</ecNumber>
    </recommendedName>
</protein>
<comment type="function">
    <text evidence="1">Ethanolamine phosphate transferase involved in glycosylphosphatidylinositol-anchor biosynthesis. Transfers ethanolamine phosphate to the first alpha-1,4-linked mannose of the glycosylphosphatidylinositol precursor of GPI-anchor (By similarity).</text>
</comment>
<comment type="pathway">
    <text>Glycolipid biosynthesis; glycosylphosphatidylinositol-anchor biosynthesis.</text>
</comment>
<comment type="subcellular location">
    <subcellularLocation>
        <location evidence="1">Endoplasmic reticulum membrane</location>
        <topology evidence="1">Multi-pass membrane protein</topology>
    </subcellularLocation>
</comment>
<comment type="similarity">
    <text evidence="4">Belongs to the PIGG/PIGN/PIGO family. PIGN subfamily.</text>
</comment>
<organism>
    <name type="scientific">Aspergillus oryzae (strain ATCC 42149 / RIB 40)</name>
    <name type="common">Yellow koji mold</name>
    <dbReference type="NCBI Taxonomy" id="510516"/>
    <lineage>
        <taxon>Eukaryota</taxon>
        <taxon>Fungi</taxon>
        <taxon>Dikarya</taxon>
        <taxon>Ascomycota</taxon>
        <taxon>Pezizomycotina</taxon>
        <taxon>Eurotiomycetes</taxon>
        <taxon>Eurotiomycetidae</taxon>
        <taxon>Eurotiales</taxon>
        <taxon>Aspergillaceae</taxon>
        <taxon>Aspergillus</taxon>
        <taxon>Aspergillus subgen. Circumdati</taxon>
    </lineage>
</organism>
<reference key="1">
    <citation type="journal article" date="2005" name="Nature">
        <title>Genome sequencing and analysis of Aspergillus oryzae.</title>
        <authorList>
            <person name="Machida M."/>
            <person name="Asai K."/>
            <person name="Sano M."/>
            <person name="Tanaka T."/>
            <person name="Kumagai T."/>
            <person name="Terai G."/>
            <person name="Kusumoto K."/>
            <person name="Arima T."/>
            <person name="Akita O."/>
            <person name="Kashiwagi Y."/>
            <person name="Abe K."/>
            <person name="Gomi K."/>
            <person name="Horiuchi H."/>
            <person name="Kitamoto K."/>
            <person name="Kobayashi T."/>
            <person name="Takeuchi M."/>
            <person name="Denning D.W."/>
            <person name="Galagan J.E."/>
            <person name="Nierman W.C."/>
            <person name="Yu J."/>
            <person name="Archer D.B."/>
            <person name="Bennett J.W."/>
            <person name="Bhatnagar D."/>
            <person name="Cleveland T.E."/>
            <person name="Fedorova N.D."/>
            <person name="Gotoh O."/>
            <person name="Horikawa H."/>
            <person name="Hosoyama A."/>
            <person name="Ichinomiya M."/>
            <person name="Igarashi R."/>
            <person name="Iwashita K."/>
            <person name="Juvvadi P.R."/>
            <person name="Kato M."/>
            <person name="Kato Y."/>
            <person name="Kin T."/>
            <person name="Kokubun A."/>
            <person name="Maeda H."/>
            <person name="Maeyama N."/>
            <person name="Maruyama J."/>
            <person name="Nagasaki H."/>
            <person name="Nakajima T."/>
            <person name="Oda K."/>
            <person name="Okada K."/>
            <person name="Paulsen I."/>
            <person name="Sakamoto K."/>
            <person name="Sawano T."/>
            <person name="Takahashi M."/>
            <person name="Takase K."/>
            <person name="Terabayashi Y."/>
            <person name="Wortman J.R."/>
            <person name="Yamada O."/>
            <person name="Yamagata Y."/>
            <person name="Anazawa H."/>
            <person name="Hata Y."/>
            <person name="Koide Y."/>
            <person name="Komori T."/>
            <person name="Koyama Y."/>
            <person name="Minetoki T."/>
            <person name="Suharnan S."/>
            <person name="Tanaka A."/>
            <person name="Isono K."/>
            <person name="Kuhara S."/>
            <person name="Ogasawara N."/>
            <person name="Kikuchi H."/>
        </authorList>
    </citation>
    <scope>NUCLEOTIDE SEQUENCE [LARGE SCALE GENOMIC DNA]</scope>
    <source>
        <strain>ATCC 42149 / RIB 40</strain>
    </source>
</reference>